<gene>
    <name evidence="1" type="primary">udk</name>
    <name type="ordered locus">SE_1294</name>
</gene>
<protein>
    <recommendedName>
        <fullName evidence="1">Uridine kinase</fullName>
        <ecNumber evidence="1">2.7.1.48</ecNumber>
    </recommendedName>
    <alternativeName>
        <fullName evidence="1">Cytidine monophosphokinase</fullName>
    </alternativeName>
    <alternativeName>
        <fullName evidence="1">Uridine monophosphokinase</fullName>
    </alternativeName>
</protein>
<reference key="1">
    <citation type="journal article" date="2003" name="Mol. Microbiol.">
        <title>Genome-based analysis of virulence genes in a non-biofilm-forming Staphylococcus epidermidis strain (ATCC 12228).</title>
        <authorList>
            <person name="Zhang Y.-Q."/>
            <person name="Ren S.-X."/>
            <person name="Li H.-L."/>
            <person name="Wang Y.-X."/>
            <person name="Fu G."/>
            <person name="Yang J."/>
            <person name="Qin Z.-Q."/>
            <person name="Miao Y.-G."/>
            <person name="Wang W.-Y."/>
            <person name="Chen R.-S."/>
            <person name="Shen Y."/>
            <person name="Chen Z."/>
            <person name="Yuan Z.-H."/>
            <person name="Zhao G.-P."/>
            <person name="Qu D."/>
            <person name="Danchin A."/>
            <person name="Wen Y.-M."/>
        </authorList>
    </citation>
    <scope>NUCLEOTIDE SEQUENCE [LARGE SCALE GENOMIC DNA]</scope>
    <source>
        <strain>ATCC 12228 / FDA PCI 1200</strain>
    </source>
</reference>
<keyword id="KW-0067">ATP-binding</keyword>
<keyword id="KW-0963">Cytoplasm</keyword>
<keyword id="KW-0418">Kinase</keyword>
<keyword id="KW-0547">Nucleotide-binding</keyword>
<keyword id="KW-0808">Transferase</keyword>
<accession>Q8CSB2</accession>
<proteinExistence type="inferred from homology"/>
<dbReference type="EC" id="2.7.1.48" evidence="1"/>
<dbReference type="EMBL" id="AE015929">
    <property type="protein sequence ID" value="AAO04893.1"/>
    <property type="molecule type" value="Genomic_DNA"/>
</dbReference>
<dbReference type="RefSeq" id="NP_764849.1">
    <property type="nucleotide sequence ID" value="NC_004461.1"/>
</dbReference>
<dbReference type="RefSeq" id="WP_001830824.1">
    <property type="nucleotide sequence ID" value="NZ_WBME01000053.1"/>
</dbReference>
<dbReference type="SMR" id="Q8CSB2"/>
<dbReference type="GeneID" id="50018590"/>
<dbReference type="KEGG" id="sep:SE_1294"/>
<dbReference type="PATRIC" id="fig|176280.10.peg.1263"/>
<dbReference type="eggNOG" id="COG0572">
    <property type="taxonomic scope" value="Bacteria"/>
</dbReference>
<dbReference type="HOGENOM" id="CLU_021278_1_2_9"/>
<dbReference type="OrthoDB" id="9777642at2"/>
<dbReference type="UniPathway" id="UPA00574">
    <property type="reaction ID" value="UER00637"/>
</dbReference>
<dbReference type="UniPathway" id="UPA00579">
    <property type="reaction ID" value="UER00640"/>
</dbReference>
<dbReference type="Proteomes" id="UP000001411">
    <property type="component" value="Chromosome"/>
</dbReference>
<dbReference type="GO" id="GO:0005737">
    <property type="term" value="C:cytoplasm"/>
    <property type="evidence" value="ECO:0007669"/>
    <property type="project" value="UniProtKB-SubCell"/>
</dbReference>
<dbReference type="GO" id="GO:0005524">
    <property type="term" value="F:ATP binding"/>
    <property type="evidence" value="ECO:0007669"/>
    <property type="project" value="UniProtKB-UniRule"/>
</dbReference>
<dbReference type="GO" id="GO:0043771">
    <property type="term" value="F:cytidine kinase activity"/>
    <property type="evidence" value="ECO:0007669"/>
    <property type="project" value="RHEA"/>
</dbReference>
<dbReference type="GO" id="GO:0004849">
    <property type="term" value="F:uridine kinase activity"/>
    <property type="evidence" value="ECO:0007669"/>
    <property type="project" value="UniProtKB-UniRule"/>
</dbReference>
<dbReference type="GO" id="GO:0044211">
    <property type="term" value="P:CTP salvage"/>
    <property type="evidence" value="ECO:0007669"/>
    <property type="project" value="UniProtKB-UniRule"/>
</dbReference>
<dbReference type="GO" id="GO:0044206">
    <property type="term" value="P:UMP salvage"/>
    <property type="evidence" value="ECO:0007669"/>
    <property type="project" value="UniProtKB-UniRule"/>
</dbReference>
<dbReference type="CDD" id="cd02023">
    <property type="entry name" value="UMPK"/>
    <property type="match status" value="1"/>
</dbReference>
<dbReference type="Gene3D" id="3.40.50.300">
    <property type="entry name" value="P-loop containing nucleotide triphosphate hydrolases"/>
    <property type="match status" value="1"/>
</dbReference>
<dbReference type="HAMAP" id="MF_00551">
    <property type="entry name" value="Uridine_kinase"/>
    <property type="match status" value="1"/>
</dbReference>
<dbReference type="InterPro" id="IPR027417">
    <property type="entry name" value="P-loop_NTPase"/>
</dbReference>
<dbReference type="InterPro" id="IPR006083">
    <property type="entry name" value="PRK/URK"/>
</dbReference>
<dbReference type="InterPro" id="IPR026008">
    <property type="entry name" value="Uridine_kinase"/>
</dbReference>
<dbReference type="InterPro" id="IPR000764">
    <property type="entry name" value="Uridine_kinase-like"/>
</dbReference>
<dbReference type="NCBIfam" id="NF004018">
    <property type="entry name" value="PRK05480.1"/>
    <property type="match status" value="1"/>
</dbReference>
<dbReference type="NCBIfam" id="TIGR00235">
    <property type="entry name" value="udk"/>
    <property type="match status" value="1"/>
</dbReference>
<dbReference type="PANTHER" id="PTHR10285">
    <property type="entry name" value="URIDINE KINASE"/>
    <property type="match status" value="1"/>
</dbReference>
<dbReference type="Pfam" id="PF00485">
    <property type="entry name" value="PRK"/>
    <property type="match status" value="1"/>
</dbReference>
<dbReference type="PRINTS" id="PR00988">
    <property type="entry name" value="URIDINKINASE"/>
</dbReference>
<dbReference type="SUPFAM" id="SSF52540">
    <property type="entry name" value="P-loop containing nucleoside triphosphate hydrolases"/>
    <property type="match status" value="1"/>
</dbReference>
<organism>
    <name type="scientific">Staphylococcus epidermidis (strain ATCC 12228 / FDA PCI 1200)</name>
    <dbReference type="NCBI Taxonomy" id="176280"/>
    <lineage>
        <taxon>Bacteria</taxon>
        <taxon>Bacillati</taxon>
        <taxon>Bacillota</taxon>
        <taxon>Bacilli</taxon>
        <taxon>Bacillales</taxon>
        <taxon>Staphylococcaceae</taxon>
        <taxon>Staphylococcus</taxon>
    </lineage>
</organism>
<feature type="chain" id="PRO_0000164494" description="Uridine kinase">
    <location>
        <begin position="1"/>
        <end position="207"/>
    </location>
</feature>
<feature type="binding site" evidence="1">
    <location>
        <begin position="11"/>
        <end position="18"/>
    </location>
    <ligand>
        <name>ATP</name>
        <dbReference type="ChEBI" id="CHEBI:30616"/>
    </ligand>
</feature>
<comment type="catalytic activity">
    <reaction evidence="1">
        <text>uridine + ATP = UMP + ADP + H(+)</text>
        <dbReference type="Rhea" id="RHEA:16825"/>
        <dbReference type="ChEBI" id="CHEBI:15378"/>
        <dbReference type="ChEBI" id="CHEBI:16704"/>
        <dbReference type="ChEBI" id="CHEBI:30616"/>
        <dbReference type="ChEBI" id="CHEBI:57865"/>
        <dbReference type="ChEBI" id="CHEBI:456216"/>
        <dbReference type="EC" id="2.7.1.48"/>
    </reaction>
</comment>
<comment type="catalytic activity">
    <reaction evidence="1">
        <text>cytidine + ATP = CMP + ADP + H(+)</text>
        <dbReference type="Rhea" id="RHEA:24674"/>
        <dbReference type="ChEBI" id="CHEBI:15378"/>
        <dbReference type="ChEBI" id="CHEBI:17562"/>
        <dbReference type="ChEBI" id="CHEBI:30616"/>
        <dbReference type="ChEBI" id="CHEBI:60377"/>
        <dbReference type="ChEBI" id="CHEBI:456216"/>
        <dbReference type="EC" id="2.7.1.48"/>
    </reaction>
</comment>
<comment type="pathway">
    <text evidence="1">Pyrimidine metabolism; CTP biosynthesis via salvage pathway; CTP from cytidine: step 1/3.</text>
</comment>
<comment type="pathway">
    <text evidence="1">Pyrimidine metabolism; UMP biosynthesis via salvage pathway; UMP from uridine: step 1/1.</text>
</comment>
<comment type="subcellular location">
    <subcellularLocation>
        <location evidence="1">Cytoplasm</location>
    </subcellularLocation>
</comment>
<comment type="similarity">
    <text evidence="1">Belongs to the uridine kinase family.</text>
</comment>
<sequence>MNQTTIIGIAGGSGSGKTTVTNAIMKNLEGHSVALLAQDYYYKDQSHLTFEERLETNYDHPFAFDNDLLIHNLKDLRNGKPVEVPTYDYSQHTRSKETIAFDPKDVIIVEGIFALENNTLRDMMDVKIYVDTDADLRILRRLTRDTKERGRTMESVINQYLNVVRPMHEQFIEPTKKHADIIIPEGGSNKVAIDIMTTKIQSLVSKK</sequence>
<evidence type="ECO:0000255" key="1">
    <source>
        <dbReference type="HAMAP-Rule" id="MF_00551"/>
    </source>
</evidence>
<name>URK_STAES</name>